<accession>P17761</accession>
<gene>
    <name type="primary">vpr</name>
</gene>
<protein>
    <recommendedName>
        <fullName>Protein Vpr</fullName>
    </recommendedName>
    <alternativeName>
        <fullName>R ORF protein</fullName>
    </alternativeName>
    <alternativeName>
        <fullName>Viral protein R</fullName>
    </alternativeName>
</protein>
<comment type="function">
    <text evidence="1">Stimulates gene expression driven by the HIV-2 LTR. Prevents infected cells from undergoing mitosis and proliferating, by inducing arrest or delay in the G2 phase of the cell cycle. Cell cycle arrest creates a favorable environment for maximizing viral expression and production (By similarity).</text>
</comment>
<comment type="subunit">
    <text evidence="1">Interacts with human UNG.</text>
</comment>
<comment type="subcellular location">
    <subcellularLocation>
        <location>Virion</location>
    </subcellularLocation>
    <subcellularLocation>
        <location evidence="1">Host nucleus</location>
    </subcellularLocation>
</comment>
<comment type="miscellaneous">
    <text>This isolate is from a Gambian case of 'neuro-AIDS'.</text>
</comment>
<organism>
    <name type="scientific">Human immunodeficiency virus type 2 subtype A (isolate D194)</name>
    <name type="common">HIV-2</name>
    <dbReference type="NCBI Taxonomy" id="11713"/>
    <lineage>
        <taxon>Viruses</taxon>
        <taxon>Riboviria</taxon>
        <taxon>Pararnavirae</taxon>
        <taxon>Artverviricota</taxon>
        <taxon>Revtraviricetes</taxon>
        <taxon>Ortervirales</taxon>
        <taxon>Retroviridae</taxon>
        <taxon>Orthoretrovirinae</taxon>
        <taxon>Lentivirus</taxon>
        <taxon>Human immunodeficiency virus 2</taxon>
    </lineage>
</organism>
<proteinExistence type="inferred from homology"/>
<organismHost>
    <name type="scientific">Homo sapiens</name>
    <name type="common">Human</name>
    <dbReference type="NCBI Taxonomy" id="9606"/>
</organismHost>
<feature type="chain" id="PRO_0000085455" description="Protein Vpr">
    <location>
        <begin position="1"/>
        <end position="105"/>
    </location>
</feature>
<feature type="region of interest" description="Disordered" evidence="2">
    <location>
        <begin position="84"/>
        <end position="105"/>
    </location>
</feature>
<feature type="modified residue" description="Phosphoserine; by host" evidence="1">
    <location>
        <position position="84"/>
    </location>
</feature>
<dbReference type="EMBL" id="J04542">
    <property type="protein sequence ID" value="AAA76844.1"/>
    <property type="molecule type" value="Genomic_DNA"/>
</dbReference>
<dbReference type="EMBL" id="X52223">
    <property type="protein sequence ID" value="CAA36468.1"/>
    <property type="molecule type" value="Genomic_DNA"/>
</dbReference>
<dbReference type="PIR" id="S12156">
    <property type="entry name" value="S12156"/>
</dbReference>
<dbReference type="SMR" id="P17761"/>
<dbReference type="Proteomes" id="UP000007422">
    <property type="component" value="Segment"/>
</dbReference>
<dbReference type="GO" id="GO:0043657">
    <property type="term" value="C:host cell"/>
    <property type="evidence" value="ECO:0007669"/>
    <property type="project" value="GOC"/>
</dbReference>
<dbReference type="GO" id="GO:0042025">
    <property type="term" value="C:host cell nucleus"/>
    <property type="evidence" value="ECO:0007669"/>
    <property type="project" value="UniProtKB-SubCell"/>
</dbReference>
<dbReference type="GO" id="GO:0044423">
    <property type="term" value="C:virion component"/>
    <property type="evidence" value="ECO:0007669"/>
    <property type="project" value="UniProtKB-KW"/>
</dbReference>
<dbReference type="GO" id="GO:0046718">
    <property type="term" value="P:symbiont entry into host cell"/>
    <property type="evidence" value="ECO:0007669"/>
    <property type="project" value="UniProtKB-KW"/>
</dbReference>
<dbReference type="GO" id="GO:0039592">
    <property type="term" value="P:symbiont-mediated arrest of host cell cycle during G2/M transition"/>
    <property type="evidence" value="ECO:0007669"/>
    <property type="project" value="UniProtKB-KW"/>
</dbReference>
<dbReference type="GO" id="GO:0075732">
    <property type="term" value="P:viral penetration into host nucleus"/>
    <property type="evidence" value="ECO:0007669"/>
    <property type="project" value="UniProtKB-KW"/>
</dbReference>
<dbReference type="Gene3D" id="6.10.210.10">
    <property type="match status" value="1"/>
</dbReference>
<dbReference type="Gene3D" id="1.20.5.90">
    <property type="entry name" value="VpR/VpX protein, C-terminal domain"/>
    <property type="match status" value="1"/>
</dbReference>
<dbReference type="InterPro" id="IPR000012">
    <property type="entry name" value="RetroV_VpR/X"/>
</dbReference>
<dbReference type="Pfam" id="PF00522">
    <property type="entry name" value="VPR"/>
    <property type="match status" value="1"/>
</dbReference>
<dbReference type="PRINTS" id="PR00444">
    <property type="entry name" value="HIVVPRVPX"/>
</dbReference>
<name>VPR_HV2D1</name>
<keyword id="KW-0010">Activator</keyword>
<keyword id="KW-0014">AIDS</keyword>
<keyword id="KW-0131">Cell cycle</keyword>
<keyword id="KW-1079">Host G2/M cell cycle arrest by virus</keyword>
<keyword id="KW-1048">Host nucleus</keyword>
<keyword id="KW-0945">Host-virus interaction</keyword>
<keyword id="KW-1121">Modulation of host cell cycle by virus</keyword>
<keyword id="KW-0597">Phosphoprotein</keyword>
<keyword id="KW-0804">Transcription</keyword>
<keyword id="KW-0805">Transcription regulation</keyword>
<keyword id="KW-1163">Viral penetration into host nucleus</keyword>
<keyword id="KW-0946">Virion</keyword>
<keyword id="KW-1160">Virus entry into host cell</keyword>
<reference key="1">
    <citation type="journal article" date="1989" name="Proc. Natl. Acad. Sci. U.S.A.">
        <title>Molecular cloning of two west African human immunodeficiency virus type 2 isolates that replicate well in macrophages: a Gambian isolate, from a patient with neurologic acquired immunodeficiency syndrome, and a highly divergent Ghanian isolate.</title>
        <authorList>
            <person name="Kuehnel H."/>
            <person name="von Briesen H."/>
            <person name="Dietrich U."/>
            <person name="Adamski M."/>
            <person name="Mix D."/>
            <person name="Biesert L."/>
            <person name="Kreutz R."/>
            <person name="Immelmann A."/>
            <person name="Henco K."/>
            <person name="Meichsner C."/>
            <person name="Andreesen R."/>
            <person name="Gelderblom H."/>
            <person name="Ruebsamen-Waigmann H."/>
        </authorList>
    </citation>
    <scope>NUCLEOTIDE SEQUENCE [GENOMIC DNA]</scope>
</reference>
<reference key="2">
    <citation type="journal article" date="1990" name="Nucleic Acids Res.">
        <title>Nucleotide sequence of HIV-2D194, an isolate from a Gambian case of 'neuro-AIDS', which showed excellent growth in macrophages.</title>
        <authorList>
            <person name="Kuehnel H."/>
            <person name="Kreutz R."/>
            <person name="Ruebsamen-Waigmann H."/>
        </authorList>
    </citation>
    <scope>NUCLEOTIDE SEQUENCE [GENOMIC DNA]</scope>
</reference>
<sequence length="105" mass="11933">MTEAPTEFPPEDGTPRRELGSTWVIETLKEIKEEALKHFDPCLLIALGNYIYNRHGDTLEGARELIRVLQRALFVHIRAGCDRSRKGQTRRRAPCPAAPTPRGMH</sequence>
<evidence type="ECO:0000250" key="1"/>
<evidence type="ECO:0000256" key="2">
    <source>
        <dbReference type="SAM" id="MobiDB-lite"/>
    </source>
</evidence>